<protein>
    <recommendedName>
        <fullName evidence="1">Trigger factor</fullName>
        <shortName evidence="1">TF</shortName>
        <ecNumber evidence="1">5.2.1.8</ecNumber>
    </recommendedName>
    <alternativeName>
        <fullName evidence="1">PPIase</fullName>
    </alternativeName>
</protein>
<feature type="chain" id="PRO_0000179430" description="Trigger factor">
    <location>
        <begin position="1"/>
        <end position="433"/>
    </location>
</feature>
<feature type="domain" description="PPIase FKBP-type" evidence="1">
    <location>
        <begin position="163"/>
        <end position="248"/>
    </location>
</feature>
<reference key="1">
    <citation type="journal article" date="2002" name="Lancet">
        <title>Genome and virulence determinants of high virulence community-acquired MRSA.</title>
        <authorList>
            <person name="Baba T."/>
            <person name="Takeuchi F."/>
            <person name="Kuroda M."/>
            <person name="Yuzawa H."/>
            <person name="Aoki K."/>
            <person name="Oguchi A."/>
            <person name="Nagai Y."/>
            <person name="Iwama N."/>
            <person name="Asano K."/>
            <person name="Naimi T."/>
            <person name="Kuroda H."/>
            <person name="Cui L."/>
            <person name="Yamamoto K."/>
            <person name="Hiramatsu K."/>
        </authorList>
    </citation>
    <scope>NUCLEOTIDE SEQUENCE [LARGE SCALE GENOMIC DNA]</scope>
    <source>
        <strain>MW2</strain>
    </source>
</reference>
<keyword id="KW-0131">Cell cycle</keyword>
<keyword id="KW-0132">Cell division</keyword>
<keyword id="KW-0143">Chaperone</keyword>
<keyword id="KW-0963">Cytoplasm</keyword>
<keyword id="KW-0413">Isomerase</keyword>
<keyword id="KW-0697">Rotamase</keyword>
<comment type="function">
    <text evidence="1">Involved in protein export. Acts as a chaperone by maintaining the newly synthesized protein in an open conformation. Functions as a peptidyl-prolyl cis-trans isomerase.</text>
</comment>
<comment type="catalytic activity">
    <reaction evidence="1">
        <text>[protein]-peptidylproline (omega=180) = [protein]-peptidylproline (omega=0)</text>
        <dbReference type="Rhea" id="RHEA:16237"/>
        <dbReference type="Rhea" id="RHEA-COMP:10747"/>
        <dbReference type="Rhea" id="RHEA-COMP:10748"/>
        <dbReference type="ChEBI" id="CHEBI:83833"/>
        <dbReference type="ChEBI" id="CHEBI:83834"/>
        <dbReference type="EC" id="5.2.1.8"/>
    </reaction>
</comment>
<comment type="subcellular location">
    <subcellularLocation>
        <location>Cytoplasm</location>
    </subcellularLocation>
    <text evidence="1">About half TF is bound to the ribosome near the polypeptide exit tunnel while the other half is free in the cytoplasm.</text>
</comment>
<comment type="domain">
    <text evidence="1">Consists of 3 domains; the N-terminus binds the ribosome, the middle domain has PPIase activity, while the C-terminus has intrinsic chaperone activity on its own.</text>
</comment>
<comment type="similarity">
    <text evidence="1">Belongs to the FKBP-type PPIase family. Tig subfamily.</text>
</comment>
<accession>P66935</accession>
<accession>Q99TI6</accession>
<evidence type="ECO:0000255" key="1">
    <source>
        <dbReference type="HAMAP-Rule" id="MF_00303"/>
    </source>
</evidence>
<gene>
    <name evidence="1" type="primary">tig</name>
    <name type="ordered locus">MW1619</name>
</gene>
<proteinExistence type="inferred from homology"/>
<dbReference type="EC" id="5.2.1.8" evidence="1"/>
<dbReference type="EMBL" id="BA000033">
    <property type="protein sequence ID" value="BAB95484.1"/>
    <property type="molecule type" value="Genomic_DNA"/>
</dbReference>
<dbReference type="RefSeq" id="WP_000127573.1">
    <property type="nucleotide sequence ID" value="NC_003923.1"/>
</dbReference>
<dbReference type="SMR" id="P66935"/>
<dbReference type="KEGG" id="sam:MW1619"/>
<dbReference type="HOGENOM" id="CLU_033058_3_2_9"/>
<dbReference type="GO" id="GO:0005737">
    <property type="term" value="C:cytoplasm"/>
    <property type="evidence" value="ECO:0007669"/>
    <property type="project" value="UniProtKB-SubCell"/>
</dbReference>
<dbReference type="GO" id="GO:0003755">
    <property type="term" value="F:peptidyl-prolyl cis-trans isomerase activity"/>
    <property type="evidence" value="ECO:0007669"/>
    <property type="project" value="UniProtKB-UniRule"/>
</dbReference>
<dbReference type="GO" id="GO:0044183">
    <property type="term" value="F:protein folding chaperone"/>
    <property type="evidence" value="ECO:0007669"/>
    <property type="project" value="TreeGrafter"/>
</dbReference>
<dbReference type="GO" id="GO:0043022">
    <property type="term" value="F:ribosome binding"/>
    <property type="evidence" value="ECO:0007669"/>
    <property type="project" value="TreeGrafter"/>
</dbReference>
<dbReference type="GO" id="GO:0051083">
    <property type="term" value="P:'de novo' cotranslational protein folding"/>
    <property type="evidence" value="ECO:0007669"/>
    <property type="project" value="TreeGrafter"/>
</dbReference>
<dbReference type="GO" id="GO:0051301">
    <property type="term" value="P:cell division"/>
    <property type="evidence" value="ECO:0007669"/>
    <property type="project" value="UniProtKB-KW"/>
</dbReference>
<dbReference type="GO" id="GO:0061077">
    <property type="term" value="P:chaperone-mediated protein folding"/>
    <property type="evidence" value="ECO:0007669"/>
    <property type="project" value="TreeGrafter"/>
</dbReference>
<dbReference type="GO" id="GO:0015031">
    <property type="term" value="P:protein transport"/>
    <property type="evidence" value="ECO:0007669"/>
    <property type="project" value="UniProtKB-UniRule"/>
</dbReference>
<dbReference type="GO" id="GO:0043335">
    <property type="term" value="P:protein unfolding"/>
    <property type="evidence" value="ECO:0007669"/>
    <property type="project" value="TreeGrafter"/>
</dbReference>
<dbReference type="FunFam" id="3.10.50.40:FF:000001">
    <property type="entry name" value="Trigger factor"/>
    <property type="match status" value="1"/>
</dbReference>
<dbReference type="FunFam" id="3.30.70.1050:FF:000002">
    <property type="entry name" value="Trigger factor"/>
    <property type="match status" value="1"/>
</dbReference>
<dbReference type="Gene3D" id="3.10.50.40">
    <property type="match status" value="1"/>
</dbReference>
<dbReference type="Gene3D" id="3.30.70.1050">
    <property type="entry name" value="Trigger factor ribosome-binding domain"/>
    <property type="match status" value="1"/>
</dbReference>
<dbReference type="Gene3D" id="1.10.3120.10">
    <property type="entry name" value="Trigger factor, C-terminal domain"/>
    <property type="match status" value="1"/>
</dbReference>
<dbReference type="HAMAP" id="MF_00303">
    <property type="entry name" value="Trigger_factor_Tig"/>
    <property type="match status" value="1"/>
</dbReference>
<dbReference type="InterPro" id="IPR046357">
    <property type="entry name" value="PPIase_dom_sf"/>
</dbReference>
<dbReference type="InterPro" id="IPR001179">
    <property type="entry name" value="PPIase_FKBP_dom"/>
</dbReference>
<dbReference type="InterPro" id="IPR005215">
    <property type="entry name" value="Trig_fac"/>
</dbReference>
<dbReference type="InterPro" id="IPR008880">
    <property type="entry name" value="Trigger_fac_C"/>
</dbReference>
<dbReference type="InterPro" id="IPR037041">
    <property type="entry name" value="Trigger_fac_C_sf"/>
</dbReference>
<dbReference type="InterPro" id="IPR008881">
    <property type="entry name" value="Trigger_fac_ribosome-bd_bac"/>
</dbReference>
<dbReference type="InterPro" id="IPR036611">
    <property type="entry name" value="Trigger_fac_ribosome-bd_sf"/>
</dbReference>
<dbReference type="InterPro" id="IPR027304">
    <property type="entry name" value="Trigger_fact/SurA_dom_sf"/>
</dbReference>
<dbReference type="NCBIfam" id="TIGR00115">
    <property type="entry name" value="tig"/>
    <property type="match status" value="1"/>
</dbReference>
<dbReference type="PANTHER" id="PTHR30560">
    <property type="entry name" value="TRIGGER FACTOR CHAPERONE AND PEPTIDYL-PROLYL CIS/TRANS ISOMERASE"/>
    <property type="match status" value="1"/>
</dbReference>
<dbReference type="PANTHER" id="PTHR30560:SF3">
    <property type="entry name" value="TRIGGER FACTOR-LIKE PROTEIN TIG, CHLOROPLASTIC"/>
    <property type="match status" value="1"/>
</dbReference>
<dbReference type="Pfam" id="PF00254">
    <property type="entry name" value="FKBP_C"/>
    <property type="match status" value="1"/>
</dbReference>
<dbReference type="Pfam" id="PF05698">
    <property type="entry name" value="Trigger_C"/>
    <property type="match status" value="1"/>
</dbReference>
<dbReference type="Pfam" id="PF05697">
    <property type="entry name" value="Trigger_N"/>
    <property type="match status" value="1"/>
</dbReference>
<dbReference type="PIRSF" id="PIRSF003095">
    <property type="entry name" value="Trigger_factor"/>
    <property type="match status" value="1"/>
</dbReference>
<dbReference type="SUPFAM" id="SSF54534">
    <property type="entry name" value="FKBP-like"/>
    <property type="match status" value="1"/>
</dbReference>
<dbReference type="SUPFAM" id="SSF109998">
    <property type="entry name" value="Triger factor/SurA peptide-binding domain-like"/>
    <property type="match status" value="1"/>
</dbReference>
<dbReference type="SUPFAM" id="SSF102735">
    <property type="entry name" value="Trigger factor ribosome-binding domain"/>
    <property type="match status" value="1"/>
</dbReference>
<dbReference type="PROSITE" id="PS50059">
    <property type="entry name" value="FKBP_PPIASE"/>
    <property type="match status" value="1"/>
</dbReference>
<organism>
    <name type="scientific">Staphylococcus aureus (strain MW2)</name>
    <dbReference type="NCBI Taxonomy" id="196620"/>
    <lineage>
        <taxon>Bacteria</taxon>
        <taxon>Bacillati</taxon>
        <taxon>Bacillota</taxon>
        <taxon>Bacilli</taxon>
        <taxon>Bacillales</taxon>
        <taxon>Staphylococcaceae</taxon>
        <taxon>Staphylococcus</taxon>
    </lineage>
</organism>
<sequence>MTATWEKKEGNEGLLTVTVPAEKVNKALDQAFKKVVKQINVPGFRKGKVPRPIFEQRFGVEALYQDAIDILLPDAYGEAIDETDIKPVAQPEVSVTQIEKGKDFIFEATVTVEPEVKLGDYKGLEIEKQETELSDDELQEAIDHSLGHLAEMVVKEDGVVENGDTVNIDFSGSVDGEEFEGGQAEGYDLEIGSGSFIPGFEEQLEGMKVDEEKDVVVTFPEEYHAEELAGKEATFKTKVNEIKFKEVPELTDEIANELDAEANTVDEYKENLRKRLAEQKATDAENVEKEEAITKATDNTTIDIPEAMVNTELDRMVSEFAQRIQQQGLDLQTYFQISGQDETQLREQMKDDAEQRVKTNLTLTAIAEAEKIEATDEDIDKELEKMSKQFNISVEDIKNTLGNTDIIKNDVRIQKVIDLLRDNAKFVEGTKED</sequence>
<name>TIG_STAAW</name>